<keyword id="KW-0489">Methyltransferase</keyword>
<keyword id="KW-1185">Reference proteome</keyword>
<keyword id="KW-0698">rRNA processing</keyword>
<keyword id="KW-0949">S-adenosyl-L-methionine</keyword>
<keyword id="KW-0808">Transferase</keyword>
<name>YLBH_BACSU</name>
<evidence type="ECO:0000256" key="1">
    <source>
        <dbReference type="SAM" id="MobiDB-lite"/>
    </source>
</evidence>
<evidence type="ECO:0000305" key="2"/>
<comment type="function">
    <text evidence="2">May catalyze the S-adenosyl-L-methionine-dependent methylation of a specific base in rRNA.</text>
</comment>
<comment type="similarity">
    <text evidence="2">Belongs to the methyltransferase superfamily. RsmD family.</text>
</comment>
<comment type="sequence caution" evidence="2">
    <conflict type="frameshift">
        <sequence resource="EMBL-CDS" id="CAB11354"/>
    </conflict>
</comment>
<dbReference type="EC" id="2.1.1.-"/>
<dbReference type="EMBL" id="Z98682">
    <property type="protein sequence ID" value="CAB11354.1"/>
    <property type="status" value="ALT_FRAME"/>
    <property type="molecule type" value="Genomic_DNA"/>
</dbReference>
<dbReference type="EMBL" id="AL009126">
    <property type="protein sequence ID" value="CAB13374.2"/>
    <property type="molecule type" value="Genomic_DNA"/>
</dbReference>
<dbReference type="PIR" id="E69874">
    <property type="entry name" value="E69874"/>
</dbReference>
<dbReference type="SMR" id="O34331"/>
<dbReference type="FunCoup" id="O34331">
    <property type="interactions" value="745"/>
</dbReference>
<dbReference type="STRING" id="224308.BSU15010"/>
<dbReference type="PaxDb" id="224308-BSU15010"/>
<dbReference type="EnsemblBacteria" id="CAB13374">
    <property type="protein sequence ID" value="CAB13374"/>
    <property type="gene ID" value="BSU_15010"/>
</dbReference>
<dbReference type="GeneID" id="936402"/>
<dbReference type="KEGG" id="bsu:BSU15010"/>
<dbReference type="PATRIC" id="fig|224308.179.peg.1636"/>
<dbReference type="eggNOG" id="COG0742">
    <property type="taxonomic scope" value="Bacteria"/>
</dbReference>
<dbReference type="InParanoid" id="O34331"/>
<dbReference type="OrthoDB" id="9803017at2"/>
<dbReference type="PhylomeDB" id="O34331"/>
<dbReference type="BioCyc" id="BSUB:BSU15010-MONOMER"/>
<dbReference type="Proteomes" id="UP000001570">
    <property type="component" value="Chromosome"/>
</dbReference>
<dbReference type="GO" id="GO:0008168">
    <property type="term" value="F:methyltransferase activity"/>
    <property type="evidence" value="ECO:0007669"/>
    <property type="project" value="UniProtKB-KW"/>
</dbReference>
<dbReference type="GO" id="GO:0031167">
    <property type="term" value="P:rRNA methylation"/>
    <property type="evidence" value="ECO:0007669"/>
    <property type="project" value="InterPro"/>
</dbReference>
<dbReference type="CDD" id="cd02440">
    <property type="entry name" value="AdoMet_MTases"/>
    <property type="match status" value="1"/>
</dbReference>
<dbReference type="Gene3D" id="3.40.50.150">
    <property type="entry name" value="Vaccinia Virus protein VP39"/>
    <property type="match status" value="1"/>
</dbReference>
<dbReference type="InterPro" id="IPR004398">
    <property type="entry name" value="RNA_MeTrfase_RsmD"/>
</dbReference>
<dbReference type="InterPro" id="IPR029063">
    <property type="entry name" value="SAM-dependent_MTases_sf"/>
</dbReference>
<dbReference type="NCBIfam" id="TIGR00095">
    <property type="entry name" value="16S rRNA (guanine(966)-N(2))-methyltransferase RsmD"/>
    <property type="match status" value="1"/>
</dbReference>
<dbReference type="PANTHER" id="PTHR43542">
    <property type="entry name" value="METHYLTRANSFERASE"/>
    <property type="match status" value="1"/>
</dbReference>
<dbReference type="PANTHER" id="PTHR43542:SF1">
    <property type="entry name" value="METHYLTRANSFERASE"/>
    <property type="match status" value="1"/>
</dbReference>
<dbReference type="Pfam" id="PF03602">
    <property type="entry name" value="Cons_hypoth95"/>
    <property type="match status" value="1"/>
</dbReference>
<dbReference type="PIRSF" id="PIRSF004553">
    <property type="entry name" value="CHP00095"/>
    <property type="match status" value="1"/>
</dbReference>
<dbReference type="SUPFAM" id="SSF53335">
    <property type="entry name" value="S-adenosyl-L-methionine-dependent methyltransferases"/>
    <property type="match status" value="1"/>
</dbReference>
<dbReference type="PROSITE" id="PS00092">
    <property type="entry name" value="N6_MTASE"/>
    <property type="match status" value="1"/>
</dbReference>
<gene>
    <name type="primary">ylbH</name>
    <name type="ordered locus">BSU15010</name>
</gene>
<reference key="1">
    <citation type="submission" date="1997-08" db="EMBL/GenBank/DDBJ databases">
        <title>Bacillus subtilis chromosomal region downstream nprE.</title>
        <authorList>
            <person name="Bertero M."/>
            <person name="Presecan E."/>
            <person name="Glaser P."/>
            <person name="Richou A."/>
            <person name="Danchin A."/>
        </authorList>
    </citation>
    <scope>NUCLEOTIDE SEQUENCE [GENOMIC DNA]</scope>
    <source>
        <strain>168</strain>
    </source>
</reference>
<reference key="2">
    <citation type="journal article" date="1997" name="Nature">
        <title>The complete genome sequence of the Gram-positive bacterium Bacillus subtilis.</title>
        <authorList>
            <person name="Kunst F."/>
            <person name="Ogasawara N."/>
            <person name="Moszer I."/>
            <person name="Albertini A.M."/>
            <person name="Alloni G."/>
            <person name="Azevedo V."/>
            <person name="Bertero M.G."/>
            <person name="Bessieres P."/>
            <person name="Bolotin A."/>
            <person name="Borchert S."/>
            <person name="Borriss R."/>
            <person name="Boursier L."/>
            <person name="Brans A."/>
            <person name="Braun M."/>
            <person name="Brignell S.C."/>
            <person name="Bron S."/>
            <person name="Brouillet S."/>
            <person name="Bruschi C.V."/>
            <person name="Caldwell B."/>
            <person name="Capuano V."/>
            <person name="Carter N.M."/>
            <person name="Choi S.-K."/>
            <person name="Codani J.-J."/>
            <person name="Connerton I.F."/>
            <person name="Cummings N.J."/>
            <person name="Daniel R.A."/>
            <person name="Denizot F."/>
            <person name="Devine K.M."/>
            <person name="Duesterhoeft A."/>
            <person name="Ehrlich S.D."/>
            <person name="Emmerson P.T."/>
            <person name="Entian K.-D."/>
            <person name="Errington J."/>
            <person name="Fabret C."/>
            <person name="Ferrari E."/>
            <person name="Foulger D."/>
            <person name="Fritz C."/>
            <person name="Fujita M."/>
            <person name="Fujita Y."/>
            <person name="Fuma S."/>
            <person name="Galizzi A."/>
            <person name="Galleron N."/>
            <person name="Ghim S.-Y."/>
            <person name="Glaser P."/>
            <person name="Goffeau A."/>
            <person name="Golightly E.J."/>
            <person name="Grandi G."/>
            <person name="Guiseppi G."/>
            <person name="Guy B.J."/>
            <person name="Haga K."/>
            <person name="Haiech J."/>
            <person name="Harwood C.R."/>
            <person name="Henaut A."/>
            <person name="Hilbert H."/>
            <person name="Holsappel S."/>
            <person name="Hosono S."/>
            <person name="Hullo M.-F."/>
            <person name="Itaya M."/>
            <person name="Jones L.-M."/>
            <person name="Joris B."/>
            <person name="Karamata D."/>
            <person name="Kasahara Y."/>
            <person name="Klaerr-Blanchard M."/>
            <person name="Klein C."/>
            <person name="Kobayashi Y."/>
            <person name="Koetter P."/>
            <person name="Koningstein G."/>
            <person name="Krogh S."/>
            <person name="Kumano M."/>
            <person name="Kurita K."/>
            <person name="Lapidus A."/>
            <person name="Lardinois S."/>
            <person name="Lauber J."/>
            <person name="Lazarevic V."/>
            <person name="Lee S.-M."/>
            <person name="Levine A."/>
            <person name="Liu H."/>
            <person name="Masuda S."/>
            <person name="Mauel C."/>
            <person name="Medigue C."/>
            <person name="Medina N."/>
            <person name="Mellado R.P."/>
            <person name="Mizuno M."/>
            <person name="Moestl D."/>
            <person name="Nakai S."/>
            <person name="Noback M."/>
            <person name="Noone D."/>
            <person name="O'Reilly M."/>
            <person name="Ogawa K."/>
            <person name="Ogiwara A."/>
            <person name="Oudega B."/>
            <person name="Park S.-H."/>
            <person name="Parro V."/>
            <person name="Pohl T.M."/>
            <person name="Portetelle D."/>
            <person name="Porwollik S."/>
            <person name="Prescott A.M."/>
            <person name="Presecan E."/>
            <person name="Pujic P."/>
            <person name="Purnelle B."/>
            <person name="Rapoport G."/>
            <person name="Rey M."/>
            <person name="Reynolds S."/>
            <person name="Rieger M."/>
            <person name="Rivolta C."/>
            <person name="Rocha E."/>
            <person name="Roche B."/>
            <person name="Rose M."/>
            <person name="Sadaie Y."/>
            <person name="Sato T."/>
            <person name="Scanlan E."/>
            <person name="Schleich S."/>
            <person name="Schroeter R."/>
            <person name="Scoffone F."/>
            <person name="Sekiguchi J."/>
            <person name="Sekowska A."/>
            <person name="Seror S.J."/>
            <person name="Serror P."/>
            <person name="Shin B.-S."/>
            <person name="Soldo B."/>
            <person name="Sorokin A."/>
            <person name="Tacconi E."/>
            <person name="Takagi T."/>
            <person name="Takahashi H."/>
            <person name="Takemaru K."/>
            <person name="Takeuchi M."/>
            <person name="Tamakoshi A."/>
            <person name="Tanaka T."/>
            <person name="Terpstra P."/>
            <person name="Tognoni A."/>
            <person name="Tosato V."/>
            <person name="Uchiyama S."/>
            <person name="Vandenbol M."/>
            <person name="Vannier F."/>
            <person name="Vassarotti A."/>
            <person name="Viari A."/>
            <person name="Wambutt R."/>
            <person name="Wedler E."/>
            <person name="Wedler H."/>
            <person name="Weitzenegger T."/>
            <person name="Winters P."/>
            <person name="Wipat A."/>
            <person name="Yamamoto H."/>
            <person name="Yamane K."/>
            <person name="Yasumoto K."/>
            <person name="Yata K."/>
            <person name="Yoshida K."/>
            <person name="Yoshikawa H.-F."/>
            <person name="Zumstein E."/>
            <person name="Yoshikawa H."/>
            <person name="Danchin A."/>
        </authorList>
    </citation>
    <scope>NUCLEOTIDE SEQUENCE [LARGE SCALE GENOMIC DNA]</scope>
    <source>
        <strain>168</strain>
    </source>
</reference>
<feature type="chain" id="PRO_0000384391" description="Putative rRNA methyltransferase YlbH">
    <location>
        <begin position="1"/>
        <end position="184"/>
    </location>
</feature>
<feature type="region of interest" description="Disordered" evidence="1">
    <location>
        <begin position="1"/>
        <end position="22"/>
    </location>
</feature>
<accession>O34331</accession>
<accession>C0SP83</accession>
<accession>Q797T2</accession>
<sequence length="184" mass="20471">MRVISGSKKGRSLKAVAGTSTRPTTDKVKESIFNMIGPYFDGGRGLDLFAGSGGLGIEALSRGFEHCIFVDRDFKAIQTVKSNLKTLELTKHAQVYRNDAERALHAAAKRETGFRGIFLDPPYKEQKLKALLTLIDEYQMLEEDGFIVAEHDREVELPETVGDLVMTRKETYGLTGVAIYKKRG</sequence>
<proteinExistence type="inferred from homology"/>
<protein>
    <recommendedName>
        <fullName>Putative rRNA methyltransferase YlbH</fullName>
        <ecNumber>2.1.1.-</ecNumber>
    </recommendedName>
</protein>
<organism>
    <name type="scientific">Bacillus subtilis (strain 168)</name>
    <dbReference type="NCBI Taxonomy" id="224308"/>
    <lineage>
        <taxon>Bacteria</taxon>
        <taxon>Bacillati</taxon>
        <taxon>Bacillota</taxon>
        <taxon>Bacilli</taxon>
        <taxon>Bacillales</taxon>
        <taxon>Bacillaceae</taxon>
        <taxon>Bacillus</taxon>
    </lineage>
</organism>